<name>RSMG_ACIC1</name>
<dbReference type="EC" id="2.1.1.-" evidence="1"/>
<dbReference type="EMBL" id="CP000481">
    <property type="protein sequence ID" value="ABK53928.1"/>
    <property type="molecule type" value="Genomic_DNA"/>
</dbReference>
<dbReference type="RefSeq" id="WP_011720991.1">
    <property type="nucleotide sequence ID" value="NC_008578.1"/>
</dbReference>
<dbReference type="SMR" id="A0LWW8"/>
<dbReference type="FunCoup" id="A0LWW8">
    <property type="interactions" value="25"/>
</dbReference>
<dbReference type="STRING" id="351607.Acel_2156"/>
<dbReference type="KEGG" id="ace:Acel_2156"/>
<dbReference type="eggNOG" id="COG0357">
    <property type="taxonomic scope" value="Bacteria"/>
</dbReference>
<dbReference type="HOGENOM" id="CLU_065341_5_0_11"/>
<dbReference type="InParanoid" id="A0LWW8"/>
<dbReference type="OrthoDB" id="9808773at2"/>
<dbReference type="Proteomes" id="UP000008221">
    <property type="component" value="Chromosome"/>
</dbReference>
<dbReference type="GO" id="GO:0005829">
    <property type="term" value="C:cytosol"/>
    <property type="evidence" value="ECO:0007669"/>
    <property type="project" value="TreeGrafter"/>
</dbReference>
<dbReference type="GO" id="GO:0070043">
    <property type="term" value="F:rRNA (guanine-N7-)-methyltransferase activity"/>
    <property type="evidence" value="ECO:0007669"/>
    <property type="project" value="UniProtKB-UniRule"/>
</dbReference>
<dbReference type="CDD" id="cd02440">
    <property type="entry name" value="AdoMet_MTases"/>
    <property type="match status" value="1"/>
</dbReference>
<dbReference type="Gene3D" id="3.40.50.150">
    <property type="entry name" value="Vaccinia Virus protein VP39"/>
    <property type="match status" value="1"/>
</dbReference>
<dbReference type="HAMAP" id="MF_00074">
    <property type="entry name" value="16SrRNA_methyltr_G"/>
    <property type="match status" value="1"/>
</dbReference>
<dbReference type="InterPro" id="IPR003682">
    <property type="entry name" value="rRNA_ssu_MeTfrase_G"/>
</dbReference>
<dbReference type="InterPro" id="IPR029063">
    <property type="entry name" value="SAM-dependent_MTases_sf"/>
</dbReference>
<dbReference type="NCBIfam" id="TIGR00138">
    <property type="entry name" value="rsmG_gidB"/>
    <property type="match status" value="1"/>
</dbReference>
<dbReference type="PANTHER" id="PTHR31760">
    <property type="entry name" value="S-ADENOSYL-L-METHIONINE-DEPENDENT METHYLTRANSFERASES SUPERFAMILY PROTEIN"/>
    <property type="match status" value="1"/>
</dbReference>
<dbReference type="PANTHER" id="PTHR31760:SF0">
    <property type="entry name" value="S-ADENOSYL-L-METHIONINE-DEPENDENT METHYLTRANSFERASES SUPERFAMILY PROTEIN"/>
    <property type="match status" value="1"/>
</dbReference>
<dbReference type="Pfam" id="PF02527">
    <property type="entry name" value="GidB"/>
    <property type="match status" value="1"/>
</dbReference>
<dbReference type="SUPFAM" id="SSF53335">
    <property type="entry name" value="S-adenosyl-L-methionine-dependent methyltransferases"/>
    <property type="match status" value="1"/>
</dbReference>
<organism>
    <name type="scientific">Acidothermus cellulolyticus (strain ATCC 43068 / DSM 8971 / 11B)</name>
    <dbReference type="NCBI Taxonomy" id="351607"/>
    <lineage>
        <taxon>Bacteria</taxon>
        <taxon>Bacillati</taxon>
        <taxon>Actinomycetota</taxon>
        <taxon>Actinomycetes</taxon>
        <taxon>Acidothermales</taxon>
        <taxon>Acidothermaceae</taxon>
        <taxon>Acidothermus</taxon>
    </lineage>
</organism>
<proteinExistence type="inferred from homology"/>
<keyword id="KW-0963">Cytoplasm</keyword>
<keyword id="KW-0489">Methyltransferase</keyword>
<keyword id="KW-1185">Reference proteome</keyword>
<keyword id="KW-0698">rRNA processing</keyword>
<keyword id="KW-0949">S-adenosyl-L-methionine</keyword>
<keyword id="KW-0808">Transferase</keyword>
<gene>
    <name evidence="1" type="primary">rsmG</name>
    <name type="ordered locus">Acel_2156</name>
</gene>
<accession>A0LWW8</accession>
<sequence length="222" mass="24091">MNVGSNEEAETLRHLFGVRWPLVVRYVEWLSTAGLERGLIGPAEVDRLWERHIANCAALAPLIPVDQRVIDVGSGAGLPGIVLALARPDLEVLLIEAMSRRTAFLREVVADLGLRDVTVENSRAENVACTAPVVTARAVAPLPRLVKNVAHLLEPGGVLLALKGARVWQEVHAAEHLLAKLGYQPGVEVLTVRAVAGQLTVQRDADASNDRRWATVVRVIKQ</sequence>
<reference key="1">
    <citation type="journal article" date="2009" name="Genome Res.">
        <title>Complete genome of the cellulolytic thermophile Acidothermus cellulolyticus 11B provides insights into its ecophysiological and evolutionary adaptations.</title>
        <authorList>
            <person name="Barabote R.D."/>
            <person name="Xie G."/>
            <person name="Leu D.H."/>
            <person name="Normand P."/>
            <person name="Necsulea A."/>
            <person name="Daubin V."/>
            <person name="Medigue C."/>
            <person name="Adney W.S."/>
            <person name="Xu X.C."/>
            <person name="Lapidus A."/>
            <person name="Parales R.E."/>
            <person name="Detter C."/>
            <person name="Pujic P."/>
            <person name="Bruce D."/>
            <person name="Lavire C."/>
            <person name="Challacombe J.F."/>
            <person name="Brettin T.S."/>
            <person name="Berry A.M."/>
        </authorList>
    </citation>
    <scope>NUCLEOTIDE SEQUENCE [LARGE SCALE GENOMIC DNA]</scope>
    <source>
        <strain>ATCC 43068 / DSM 8971 / 11B</strain>
    </source>
</reference>
<comment type="function">
    <text evidence="1">Specifically methylates the N7 position of guanine in position 518 of 16S rRNA.</text>
</comment>
<comment type="subcellular location">
    <subcellularLocation>
        <location evidence="1">Cytoplasm</location>
    </subcellularLocation>
</comment>
<comment type="similarity">
    <text evidence="1">Belongs to the methyltransferase superfamily. RNA methyltransferase RsmG family.</text>
</comment>
<evidence type="ECO:0000255" key="1">
    <source>
        <dbReference type="HAMAP-Rule" id="MF_00074"/>
    </source>
</evidence>
<feature type="chain" id="PRO_1000010110" description="Ribosomal RNA small subunit methyltransferase G">
    <location>
        <begin position="1"/>
        <end position="222"/>
    </location>
</feature>
<feature type="binding site" evidence="1">
    <location>
        <position position="73"/>
    </location>
    <ligand>
        <name>S-adenosyl-L-methionine</name>
        <dbReference type="ChEBI" id="CHEBI:59789"/>
    </ligand>
</feature>
<feature type="binding site" evidence="1">
    <location>
        <position position="78"/>
    </location>
    <ligand>
        <name>S-adenosyl-L-methionine</name>
        <dbReference type="ChEBI" id="CHEBI:59789"/>
    </ligand>
</feature>
<feature type="binding site" evidence="1">
    <location>
        <begin position="124"/>
        <end position="125"/>
    </location>
    <ligand>
        <name>S-adenosyl-L-methionine</name>
        <dbReference type="ChEBI" id="CHEBI:59789"/>
    </ligand>
</feature>
<feature type="binding site" evidence="1">
    <location>
        <position position="137"/>
    </location>
    <ligand>
        <name>S-adenosyl-L-methionine</name>
        <dbReference type="ChEBI" id="CHEBI:59789"/>
    </ligand>
</feature>
<protein>
    <recommendedName>
        <fullName evidence="1">Ribosomal RNA small subunit methyltransferase G</fullName>
        <ecNumber evidence="1">2.1.1.-</ecNumber>
    </recommendedName>
    <alternativeName>
        <fullName evidence="1">16S rRNA 7-methylguanosine methyltransferase</fullName>
        <shortName evidence="1">16S rRNA m7G methyltransferase</shortName>
    </alternativeName>
</protein>